<dbReference type="EMBL" id="AF106329">
    <property type="protein sequence ID" value="AAA99215.1"/>
    <property type="molecule type" value="Genomic_DNA"/>
</dbReference>
<dbReference type="EMBL" id="AP001918">
    <property type="protein sequence ID" value="BAA97935.1"/>
    <property type="molecule type" value="Genomic_DNA"/>
</dbReference>
<dbReference type="PIR" id="JS0433">
    <property type="entry name" value="JS0433"/>
</dbReference>
<dbReference type="RefSeq" id="NP_061444.1">
    <property type="nucleotide sequence ID" value="NC_002483.1"/>
</dbReference>
<dbReference type="InterPro" id="IPR035273">
    <property type="entry name" value="DUF5431"/>
</dbReference>
<dbReference type="NCBIfam" id="NF010277">
    <property type="entry name" value="PRK13720.1"/>
    <property type="match status" value="1"/>
</dbReference>
<dbReference type="Pfam" id="PF17496">
    <property type="entry name" value="DUF5431"/>
    <property type="match status" value="1"/>
</dbReference>
<keyword id="KW-0614">Plasmid</keyword>
<keyword id="KW-1277">Toxin-antitoxin system</keyword>
<reference key="1">
    <citation type="journal article" date="1988" name="Gene">
        <title>Nucleotide sequence and transcriptional analysis of a third function (Flm) involved in F-plasmid maintenance.</title>
        <authorList>
            <person name="Loh S.M."/>
            <person name="Cram D.S."/>
            <person name="Skurray R.A."/>
        </authorList>
    </citation>
    <scope>NUCLEOTIDE SEQUENCE [GENOMIC DNA]</scope>
    <scope>INDUCTION</scope>
    <scope>DISRUPTION PHENOTYPE</scope>
    <source>
        <strain>K12 / AB1157</strain>
        <plasmid>F</plasmid>
    </source>
</reference>
<reference key="2">
    <citation type="submission" date="2000-04" db="EMBL/GenBank/DDBJ databases">
        <title>Complete nucleotide sequence of the F plasmid: its implications for organization and diversification of plasmid genomes.</title>
        <authorList>
            <person name="Shimizu H."/>
            <person name="Saitoh Y."/>
            <person name="Suda Y."/>
            <person name="Uehara K."/>
            <person name="Sampei G."/>
            <person name="Mizobuchi K."/>
        </authorList>
    </citation>
    <scope>NUCLEOTIDE SEQUENCE [LARGE SCALE GENOMIC DNA]</scope>
    <source>
        <strain>K12 / CR63</strain>
    </source>
</reference>
<sequence>MLRQHQDSLLLRFAQGEEGHETTTQLSCLVCVDRVSHTVDIHLSDTKIAVRDSLQRRIQGGGGFHGLRIR</sequence>
<protein>
    <recommendedName>
        <fullName>Protein FlmC</fullName>
    </recommendedName>
    <alternativeName>
        <fullName>F-plasmid maintenance protein C</fullName>
    </alternativeName>
</protein>
<feature type="chain" id="PRO_0000068355" description="Protein FlmC">
    <location>
        <begin position="1"/>
        <end position="70"/>
    </location>
</feature>
<name>FLMC1_ECOLI</name>
<comment type="function">
    <text evidence="1">Component of a type I toxin-antitoxin (TA) system (Probable). Either this protein or sequences upstream of it are required for translation of downstream flmA; this could be translationally coupled to flmA (PubMed:3049248).</text>
</comment>
<comment type="induction">
    <text evidence="1">Part of the flmC-flmA operon; the antisense antitoxin RNA flmB of this system overlaps the ribosome-binding site and first 3 codons of this gene on the opposite strand.</text>
</comment>
<comment type="disruption phenotype">
    <text evidence="1">A plasmid unable to express the start codon of this protein can be lost without detriment to the bacteria, when normally the plasmid is not lost due to the Flm plasmid maintenance system.</text>
</comment>
<organism>
    <name type="scientific">Escherichia coli (strain K12)</name>
    <dbReference type="NCBI Taxonomy" id="83333"/>
    <lineage>
        <taxon>Bacteria</taxon>
        <taxon>Pseudomonadati</taxon>
        <taxon>Pseudomonadota</taxon>
        <taxon>Gammaproteobacteria</taxon>
        <taxon>Enterobacterales</taxon>
        <taxon>Enterobacteriaceae</taxon>
        <taxon>Escherichia</taxon>
    </lineage>
</organism>
<accession>P11519</accession>
<gene>
    <name type="primary">flmC</name>
    <name evidence="2" type="synonym">ORF70</name>
    <name type="ordered locus">ECOK12F065</name>
</gene>
<evidence type="ECO:0000269" key="1">
    <source>
    </source>
</evidence>
<evidence type="ECO:0000303" key="2">
    <source>
    </source>
</evidence>
<proteinExistence type="evidence at transcript level"/>
<geneLocation type="plasmid">
    <name>F</name>
</geneLocation>